<protein>
    <recommendedName>
        <fullName evidence="1">Large ribosomal subunit protein uL14c</fullName>
    </recommendedName>
    <alternativeName>
        <fullName evidence="2">50S ribosomal protein L14, chloroplastic</fullName>
    </alternativeName>
</protein>
<accession>B2Y1Z6</accession>
<accession>B7ZI12</accession>
<organism>
    <name type="scientific">Welwitschia mirabilis</name>
    <name type="common">Tree tumbo</name>
    <name type="synonym">Welwitschia bainesii</name>
    <dbReference type="NCBI Taxonomy" id="3377"/>
    <lineage>
        <taxon>Eukaryota</taxon>
        <taxon>Viridiplantae</taxon>
        <taxon>Streptophyta</taxon>
        <taxon>Embryophyta</taxon>
        <taxon>Tracheophyta</taxon>
        <taxon>Spermatophyta</taxon>
        <taxon>Gnetopsida</taxon>
        <taxon>Gnetidae</taxon>
        <taxon>Welwitschiales</taxon>
        <taxon>Welwitschiaceae</taxon>
        <taxon>Welwitschia</taxon>
    </lineage>
</organism>
<geneLocation type="chloroplast"/>
<feature type="chain" id="PRO_0000355904" description="Large ribosomal subunit protein uL14c">
    <location>
        <begin position="1"/>
        <end position="122"/>
    </location>
</feature>
<proteinExistence type="inferred from homology"/>
<evidence type="ECO:0000255" key="1">
    <source>
        <dbReference type="HAMAP-Rule" id="MF_01367"/>
    </source>
</evidence>
<evidence type="ECO:0000305" key="2"/>
<name>RK14_WELMI</name>
<comment type="function">
    <text evidence="1">Binds to 23S rRNA.</text>
</comment>
<comment type="subunit">
    <text evidence="1">Part of the 50S ribosomal subunit.</text>
</comment>
<comment type="subcellular location">
    <subcellularLocation>
        <location>Plastid</location>
        <location>Chloroplast</location>
    </subcellularLocation>
</comment>
<comment type="similarity">
    <text evidence="1">Belongs to the universal ribosomal protein uL14 family.</text>
</comment>
<sequence length="122" mass="13749">MIQSQTYLNIVDNSGARKIMCIRVVGASYQRYAHIGNVIIAVIKEAVPNTKMEESEIVRAVIIRTSKEFQRDDGMRIRSDDNAAIIIDQKGNPKGTRVFGPVLQELRQYNFTKIISLAPEVL</sequence>
<reference key="1">
    <citation type="journal article" date="2008" name="BMC Evol. Biol.">
        <title>The complete plastid genome sequence of Welwitschia mirabilis: an unusually compact plastome with accelerated divergence rates.</title>
        <authorList>
            <person name="McCoy S.R."/>
            <person name="Kuehl J.V."/>
            <person name="Boore J.L."/>
            <person name="Raubeson L.A."/>
        </authorList>
    </citation>
    <scope>NUCLEOTIDE SEQUENCE [LARGE SCALE GENOMIC DNA]</scope>
</reference>
<reference key="2">
    <citation type="journal article" date="2009" name="Mol. Phylogenet. Evol.">
        <title>Evolution of reduced and compact chloroplast genomes (cpDNAs) in gnetophytes: Selection toward a lower-cost strategy.</title>
        <authorList>
            <person name="Wu C.-S."/>
            <person name="Lai Y.-T."/>
            <person name="Lin C.-P."/>
            <person name="Wang Y.-N."/>
            <person name="Chaw S.-M."/>
        </authorList>
    </citation>
    <scope>NUCLEOTIDE SEQUENCE [LARGE SCALE GENOMIC DNA]</scope>
</reference>
<dbReference type="EMBL" id="EU342371">
    <property type="protein sequence ID" value="ABY26826.1"/>
    <property type="molecule type" value="Genomic_DNA"/>
</dbReference>
<dbReference type="EMBL" id="AP009568">
    <property type="protein sequence ID" value="BAH11192.1"/>
    <property type="molecule type" value="Genomic_DNA"/>
</dbReference>
<dbReference type="RefSeq" id="YP_001876613.1">
    <property type="nucleotide sequence ID" value="NC_010654.1"/>
</dbReference>
<dbReference type="SMR" id="B2Y1Z6"/>
<dbReference type="GeneID" id="6276238"/>
<dbReference type="GO" id="GO:0009507">
    <property type="term" value="C:chloroplast"/>
    <property type="evidence" value="ECO:0007669"/>
    <property type="project" value="UniProtKB-SubCell"/>
</dbReference>
<dbReference type="GO" id="GO:0022625">
    <property type="term" value="C:cytosolic large ribosomal subunit"/>
    <property type="evidence" value="ECO:0007669"/>
    <property type="project" value="TreeGrafter"/>
</dbReference>
<dbReference type="GO" id="GO:0070180">
    <property type="term" value="F:large ribosomal subunit rRNA binding"/>
    <property type="evidence" value="ECO:0007669"/>
    <property type="project" value="TreeGrafter"/>
</dbReference>
<dbReference type="GO" id="GO:0003735">
    <property type="term" value="F:structural constituent of ribosome"/>
    <property type="evidence" value="ECO:0007669"/>
    <property type="project" value="InterPro"/>
</dbReference>
<dbReference type="GO" id="GO:0006412">
    <property type="term" value="P:translation"/>
    <property type="evidence" value="ECO:0007669"/>
    <property type="project" value="UniProtKB-UniRule"/>
</dbReference>
<dbReference type="CDD" id="cd00337">
    <property type="entry name" value="Ribosomal_uL14"/>
    <property type="match status" value="1"/>
</dbReference>
<dbReference type="FunFam" id="2.40.150.20:FF:000021">
    <property type="entry name" value="Ribosomal protein L14"/>
    <property type="match status" value="1"/>
</dbReference>
<dbReference type="Gene3D" id="2.40.150.20">
    <property type="entry name" value="Ribosomal protein L14"/>
    <property type="match status" value="1"/>
</dbReference>
<dbReference type="HAMAP" id="MF_01367">
    <property type="entry name" value="Ribosomal_uL14"/>
    <property type="match status" value="1"/>
</dbReference>
<dbReference type="InterPro" id="IPR000218">
    <property type="entry name" value="Ribosomal_uL14"/>
</dbReference>
<dbReference type="InterPro" id="IPR005745">
    <property type="entry name" value="Ribosomal_uL14_bac-type"/>
</dbReference>
<dbReference type="InterPro" id="IPR036853">
    <property type="entry name" value="Ribosomal_uL14_sf"/>
</dbReference>
<dbReference type="NCBIfam" id="TIGR01067">
    <property type="entry name" value="rplN_bact"/>
    <property type="match status" value="1"/>
</dbReference>
<dbReference type="PANTHER" id="PTHR11761">
    <property type="entry name" value="50S/60S RIBOSOMAL PROTEIN L14/L23"/>
    <property type="match status" value="1"/>
</dbReference>
<dbReference type="PANTHER" id="PTHR11761:SF3">
    <property type="entry name" value="LARGE RIBOSOMAL SUBUNIT PROTEIN UL14M"/>
    <property type="match status" value="1"/>
</dbReference>
<dbReference type="Pfam" id="PF00238">
    <property type="entry name" value="Ribosomal_L14"/>
    <property type="match status" value="1"/>
</dbReference>
<dbReference type="SMART" id="SM01374">
    <property type="entry name" value="Ribosomal_L14"/>
    <property type="match status" value="1"/>
</dbReference>
<dbReference type="SUPFAM" id="SSF50193">
    <property type="entry name" value="Ribosomal protein L14"/>
    <property type="match status" value="1"/>
</dbReference>
<keyword id="KW-0150">Chloroplast</keyword>
<keyword id="KW-0934">Plastid</keyword>
<keyword id="KW-0687">Ribonucleoprotein</keyword>
<keyword id="KW-0689">Ribosomal protein</keyword>
<keyword id="KW-0694">RNA-binding</keyword>
<keyword id="KW-0699">rRNA-binding</keyword>
<gene>
    <name evidence="1" type="primary">rpl14</name>
</gene>